<dbReference type="EMBL" id="AE017199">
    <property type="protein sequence ID" value="AAR39000.1"/>
    <property type="molecule type" value="Genomic_DNA"/>
</dbReference>
<dbReference type="SMR" id="P60847"/>
<dbReference type="STRING" id="228908.NEQ146"/>
<dbReference type="EnsemblBacteria" id="AAR39000">
    <property type="protein sequence ID" value="AAR39000"/>
    <property type="gene ID" value="NEQ146"/>
</dbReference>
<dbReference type="KEGG" id="neq:NEQ146"/>
<dbReference type="PATRIC" id="fig|228908.8.peg.148"/>
<dbReference type="HOGENOM" id="CLU_026535_0_0_2"/>
<dbReference type="Proteomes" id="UP000000578">
    <property type="component" value="Chromosome"/>
</dbReference>
<dbReference type="GO" id="GO:1990904">
    <property type="term" value="C:ribonucleoprotein complex"/>
    <property type="evidence" value="ECO:0007669"/>
    <property type="project" value="UniProtKB-KW"/>
</dbReference>
<dbReference type="GO" id="GO:0005840">
    <property type="term" value="C:ribosome"/>
    <property type="evidence" value="ECO:0007669"/>
    <property type="project" value="UniProtKB-KW"/>
</dbReference>
<dbReference type="GO" id="GO:0019843">
    <property type="term" value="F:rRNA binding"/>
    <property type="evidence" value="ECO:0007669"/>
    <property type="project" value="UniProtKB-UniRule"/>
</dbReference>
<dbReference type="GO" id="GO:0003735">
    <property type="term" value="F:structural constituent of ribosome"/>
    <property type="evidence" value="ECO:0007669"/>
    <property type="project" value="InterPro"/>
</dbReference>
<dbReference type="GO" id="GO:0006412">
    <property type="term" value="P:translation"/>
    <property type="evidence" value="ECO:0007669"/>
    <property type="project" value="UniProtKB-UniRule"/>
</dbReference>
<dbReference type="Gene3D" id="3.40.1370.10">
    <property type="match status" value="1"/>
</dbReference>
<dbReference type="HAMAP" id="MF_01328_A">
    <property type="entry name" value="Ribosomal_uL4_A"/>
    <property type="match status" value="1"/>
</dbReference>
<dbReference type="InterPro" id="IPR002136">
    <property type="entry name" value="Ribosomal_uL4"/>
</dbReference>
<dbReference type="InterPro" id="IPR023574">
    <property type="entry name" value="Ribosomal_uL4_dom_sf"/>
</dbReference>
<dbReference type="InterPro" id="IPR013000">
    <property type="entry name" value="Ribosomal_uL4_euk/arc_CS"/>
</dbReference>
<dbReference type="InterPro" id="IPR045240">
    <property type="entry name" value="Ribosomal_uL4_euk/arch"/>
</dbReference>
<dbReference type="InterPro" id="IPR019970">
    <property type="entry name" value="Ribosomall_uL4-arc"/>
</dbReference>
<dbReference type="NCBIfam" id="TIGR03672">
    <property type="entry name" value="rpl4p_arch"/>
    <property type="match status" value="1"/>
</dbReference>
<dbReference type="PANTHER" id="PTHR19431">
    <property type="entry name" value="60S RIBOSOMAL PROTEIN L4"/>
    <property type="match status" value="1"/>
</dbReference>
<dbReference type="Pfam" id="PF00573">
    <property type="entry name" value="Ribosomal_L4"/>
    <property type="match status" value="1"/>
</dbReference>
<dbReference type="SUPFAM" id="SSF52166">
    <property type="entry name" value="Ribosomal protein L4"/>
    <property type="match status" value="1"/>
</dbReference>
<dbReference type="PROSITE" id="PS00939">
    <property type="entry name" value="RIBOSOMAL_L1E"/>
    <property type="match status" value="1"/>
</dbReference>
<evidence type="ECO:0000255" key="1">
    <source>
        <dbReference type="HAMAP-Rule" id="MF_01328"/>
    </source>
</evidence>
<evidence type="ECO:0000305" key="2"/>
<name>RL4_NANEQ</name>
<organism>
    <name type="scientific">Nanoarchaeum equitans (strain Kin4-M)</name>
    <dbReference type="NCBI Taxonomy" id="228908"/>
    <lineage>
        <taxon>Archaea</taxon>
        <taxon>Nanobdellota</taxon>
        <taxon>Candidatus Nanoarchaeia</taxon>
        <taxon>Nanoarchaeales</taxon>
        <taxon>Nanoarchaeaceae</taxon>
        <taxon>Nanoarchaeum</taxon>
    </lineage>
</organism>
<keyword id="KW-1185">Reference proteome</keyword>
<keyword id="KW-0687">Ribonucleoprotein</keyword>
<keyword id="KW-0689">Ribosomal protein</keyword>
<keyword id="KW-0694">RNA-binding</keyword>
<keyword id="KW-0699">rRNA-binding</keyword>
<sequence>MEVPLYNLQASQVGNIELPPQFNEKIRFDVIKRAFLAIQSHKRQPYGASPIAGKQHSAWTSKRRRSWRTSYGRGISRVSRAILRRHGALFYWVARNIAQAVKGKKAHPPKAEKDWYEKINKKERRLAIRSALAATKELDLVKARGHIIDKPVPIVVDGLEQLRKTKEIQQLLLKLGLEKELERVYEIKRRAGKGKRRGRAYIERKGPLIVVNDYNEQLFKAVDNIPGLDIEEVPNLNVELLAPGAKPGRLLIISKDALETLRERKLFF</sequence>
<proteinExistence type="inferred from homology"/>
<accession>P60847</accession>
<comment type="function">
    <text evidence="1">One of the primary rRNA binding proteins, this protein initially binds near the 5'-end of the 23S rRNA. It is important during the early stages of 50S assembly. It makes multiple contacts with different domains of the 23S rRNA in the assembled 50S subunit and ribosome.</text>
</comment>
<comment type="function">
    <text evidence="1">Forms part of the polypeptide exit tunnel.</text>
</comment>
<comment type="subunit">
    <text evidence="1">Part of the 50S ribosomal subunit.</text>
</comment>
<comment type="similarity">
    <text evidence="1">Belongs to the universal ribosomal protein uL4 family.</text>
</comment>
<reference key="1">
    <citation type="journal article" date="2003" name="Proc. Natl. Acad. Sci. U.S.A.">
        <title>The genome of Nanoarchaeum equitans: insights into early archaeal evolution and derived parasitism.</title>
        <authorList>
            <person name="Waters E."/>
            <person name="Hohn M.J."/>
            <person name="Ahel I."/>
            <person name="Graham D.E."/>
            <person name="Adams M.D."/>
            <person name="Barnstead M."/>
            <person name="Beeson K.Y."/>
            <person name="Bibbs L."/>
            <person name="Bolanos R."/>
            <person name="Keller M."/>
            <person name="Kretz K."/>
            <person name="Lin X."/>
            <person name="Mathur E."/>
            <person name="Ni J."/>
            <person name="Podar M."/>
            <person name="Richardson T."/>
            <person name="Sutton G.G."/>
            <person name="Simon M."/>
            <person name="Soell D."/>
            <person name="Stetter K.O."/>
            <person name="Short J.M."/>
            <person name="Noorderwier M."/>
        </authorList>
    </citation>
    <scope>NUCLEOTIDE SEQUENCE [LARGE SCALE GENOMIC DNA]</scope>
    <source>
        <strain>Kin4-M</strain>
    </source>
</reference>
<protein>
    <recommendedName>
        <fullName evidence="1">Large ribosomal subunit protein uL4</fullName>
    </recommendedName>
    <alternativeName>
        <fullName evidence="2">50S ribosomal protein L4</fullName>
    </alternativeName>
</protein>
<feature type="chain" id="PRO_0000129337" description="Large ribosomal subunit protein uL4">
    <location>
        <begin position="1"/>
        <end position="268"/>
    </location>
</feature>
<gene>
    <name evidence="1" type="primary">rpl4</name>
    <name type="ordered locus">NEQ146</name>
</gene>